<evidence type="ECO:0000250" key="1">
    <source>
        <dbReference type="UniProtKB" id="Q1XH05"/>
    </source>
</evidence>
<evidence type="ECO:0000250" key="2">
    <source>
        <dbReference type="UniProtKB" id="Q75I94"/>
    </source>
</evidence>
<evidence type="ECO:0000250" key="3">
    <source>
        <dbReference type="UniProtKB" id="Q7XSK0"/>
    </source>
</evidence>
<evidence type="ECO:0000250" key="4">
    <source>
        <dbReference type="UniProtKB" id="Q9SPP9"/>
    </source>
</evidence>
<evidence type="ECO:0000255" key="5"/>
<evidence type="ECO:0000255" key="6">
    <source>
        <dbReference type="PROSITE-ProRule" id="PRU00498"/>
    </source>
</evidence>
<evidence type="ECO:0000305" key="7"/>
<sequence>MGHRLVVVLLLALLVAGAARAAEQAAGEDGIRGGAGADHQEAAGITGGLSRRSFPAGFVFGTAASAYQVEGMALKDGRGPSIWDAFVKTPGEIANNATADVTVDEYHRYKEDVNIMKSMGFDAYRFSISWSRIFPTGTGKVNWKGVAYYNRLINYMLKIGITPYANLYHYDLPEALEVQYGGLLNRKIVEAFADYAEFCFKTFGDRVKNWMTFNEPRVVAALGYDDGNFAPGRCTKCTAGNSATEPYIVAHHLILSHASAVQRYRHKYQHIQKGKIGILLDFVWYEGLTNSTADQAAAQRSRDFHVGWFLHPIIYGEYPKSLQVIVKERLPKFTADEVHMVKGSIDYVGINQYTAYYVRDQQPNATTLPSYSSDWHAAPIYERDGVPIGPRANSDWLYIVPWGLYKAVTYVKEKYGNPTMFLSENGMDDPGNVTIAQGVHDTTRVAYYRSYITKLKEAIDDGANCIGYFAWSLLDNFEWKLGYTSRFGLVYVDFRTLRRYPKMSAYWFRDLVSSKN</sequence>
<dbReference type="EC" id="3.2.1.21" evidence="2"/>
<dbReference type="EMBL" id="AP003217">
    <property type="protein sequence ID" value="BAD73293.1"/>
    <property type="molecule type" value="Genomic_DNA"/>
</dbReference>
<dbReference type="EMBL" id="AP008207">
    <property type="protein sequence ID" value="BAF05070.1"/>
    <property type="molecule type" value="Genomic_DNA"/>
</dbReference>
<dbReference type="EMBL" id="AP014957">
    <property type="protein sequence ID" value="BAS72359.1"/>
    <property type="molecule type" value="Genomic_DNA"/>
</dbReference>
<dbReference type="EMBL" id="AK069177">
    <property type="status" value="NOT_ANNOTATED_CDS"/>
    <property type="molecule type" value="mRNA"/>
</dbReference>
<dbReference type="RefSeq" id="XP_015623068.1">
    <property type="nucleotide sequence ID" value="XM_015767582.1"/>
</dbReference>
<dbReference type="SMR" id="Q5QMT0"/>
<dbReference type="FunCoup" id="Q5QMT0">
    <property type="interactions" value="957"/>
</dbReference>
<dbReference type="STRING" id="39947.Q5QMT0"/>
<dbReference type="CAZy" id="GH1">
    <property type="family name" value="Glycoside Hydrolase Family 1"/>
</dbReference>
<dbReference type="GlyCosmos" id="Q5QMT0">
    <property type="glycosylation" value="4 sites, No reported glycans"/>
</dbReference>
<dbReference type="PaxDb" id="39947-Q5QMT0"/>
<dbReference type="EnsemblPlants" id="Os01t0508000-01">
    <property type="protein sequence ID" value="Os01t0508000-01"/>
    <property type="gene ID" value="Os01g0508000"/>
</dbReference>
<dbReference type="Gramene" id="Os01t0508000-01">
    <property type="protein sequence ID" value="Os01t0508000-01"/>
    <property type="gene ID" value="Os01g0508000"/>
</dbReference>
<dbReference type="KEGG" id="dosa:Os01g0508000"/>
<dbReference type="eggNOG" id="KOG0626">
    <property type="taxonomic scope" value="Eukaryota"/>
</dbReference>
<dbReference type="HOGENOM" id="CLU_001859_1_0_1"/>
<dbReference type="InParanoid" id="Q5QMT0"/>
<dbReference type="OMA" id="VWLKVYP"/>
<dbReference type="OrthoDB" id="65569at2759"/>
<dbReference type="Proteomes" id="UP000000763">
    <property type="component" value="Chromosome 1"/>
</dbReference>
<dbReference type="Proteomes" id="UP000059680">
    <property type="component" value="Chromosome 1"/>
</dbReference>
<dbReference type="ExpressionAtlas" id="Q5QMT0">
    <property type="expression patterns" value="baseline and differential"/>
</dbReference>
<dbReference type="GO" id="GO:0033907">
    <property type="term" value="F:beta-D-fucosidase activity"/>
    <property type="evidence" value="ECO:0007669"/>
    <property type="project" value="UniProtKB-ARBA"/>
</dbReference>
<dbReference type="GO" id="GO:0004565">
    <property type="term" value="F:beta-galactosidase activity"/>
    <property type="evidence" value="ECO:0007669"/>
    <property type="project" value="UniProtKB-ARBA"/>
</dbReference>
<dbReference type="GO" id="GO:0008422">
    <property type="term" value="F:beta-glucosidase activity"/>
    <property type="evidence" value="ECO:0000318"/>
    <property type="project" value="GO_Central"/>
</dbReference>
<dbReference type="GO" id="GO:0005975">
    <property type="term" value="P:carbohydrate metabolic process"/>
    <property type="evidence" value="ECO:0007669"/>
    <property type="project" value="InterPro"/>
</dbReference>
<dbReference type="FunFam" id="3.20.20.80:FF:000041">
    <property type="entry name" value="Beta-glucosidase 7"/>
    <property type="match status" value="1"/>
</dbReference>
<dbReference type="Gene3D" id="3.20.20.80">
    <property type="entry name" value="Glycosidases"/>
    <property type="match status" value="1"/>
</dbReference>
<dbReference type="InterPro" id="IPR001360">
    <property type="entry name" value="Glyco_hydro_1"/>
</dbReference>
<dbReference type="InterPro" id="IPR017853">
    <property type="entry name" value="Glycoside_hydrolase_SF"/>
</dbReference>
<dbReference type="PANTHER" id="PTHR10353:SF330">
    <property type="entry name" value="BETA-GLUCOSIDASE 1"/>
    <property type="match status" value="1"/>
</dbReference>
<dbReference type="PANTHER" id="PTHR10353">
    <property type="entry name" value="GLYCOSYL HYDROLASE"/>
    <property type="match status" value="1"/>
</dbReference>
<dbReference type="Pfam" id="PF00232">
    <property type="entry name" value="Glyco_hydro_1"/>
    <property type="match status" value="1"/>
</dbReference>
<dbReference type="PRINTS" id="PR00131">
    <property type="entry name" value="GLHYDRLASE1"/>
</dbReference>
<dbReference type="SUPFAM" id="SSF51445">
    <property type="entry name" value="(Trans)glycosidases"/>
    <property type="match status" value="1"/>
</dbReference>
<protein>
    <recommendedName>
        <fullName>Beta-glucosidase 1</fullName>
        <shortName>Os1bglu1</shortName>
        <ecNumber evidence="2">3.2.1.21</ecNumber>
    </recommendedName>
</protein>
<keyword id="KW-1015">Disulfide bond</keyword>
<keyword id="KW-0325">Glycoprotein</keyword>
<keyword id="KW-0326">Glycosidase</keyword>
<keyword id="KW-0378">Hydrolase</keyword>
<keyword id="KW-1185">Reference proteome</keyword>
<keyword id="KW-0732">Signal</keyword>
<reference key="1">
    <citation type="journal article" date="2002" name="Nature">
        <title>The genome sequence and structure of rice chromosome 1.</title>
        <authorList>
            <person name="Sasaki T."/>
            <person name="Matsumoto T."/>
            <person name="Yamamoto K."/>
            <person name="Sakata K."/>
            <person name="Baba T."/>
            <person name="Katayose Y."/>
            <person name="Wu J."/>
            <person name="Niimura Y."/>
            <person name="Cheng Z."/>
            <person name="Nagamura Y."/>
            <person name="Antonio B.A."/>
            <person name="Kanamori H."/>
            <person name="Hosokawa S."/>
            <person name="Masukawa M."/>
            <person name="Arikawa K."/>
            <person name="Chiden Y."/>
            <person name="Hayashi M."/>
            <person name="Okamoto M."/>
            <person name="Ando T."/>
            <person name="Aoki H."/>
            <person name="Arita K."/>
            <person name="Hamada M."/>
            <person name="Harada C."/>
            <person name="Hijishita S."/>
            <person name="Honda M."/>
            <person name="Ichikawa Y."/>
            <person name="Idonuma A."/>
            <person name="Iijima M."/>
            <person name="Ikeda M."/>
            <person name="Ikeno M."/>
            <person name="Ito S."/>
            <person name="Ito T."/>
            <person name="Ito Y."/>
            <person name="Ito Y."/>
            <person name="Iwabuchi A."/>
            <person name="Kamiya K."/>
            <person name="Karasawa W."/>
            <person name="Katagiri S."/>
            <person name="Kikuta A."/>
            <person name="Kobayashi N."/>
            <person name="Kono I."/>
            <person name="Machita K."/>
            <person name="Maehara T."/>
            <person name="Mizuno H."/>
            <person name="Mizubayashi T."/>
            <person name="Mukai Y."/>
            <person name="Nagasaki H."/>
            <person name="Nakashima M."/>
            <person name="Nakama Y."/>
            <person name="Nakamichi Y."/>
            <person name="Nakamura M."/>
            <person name="Namiki N."/>
            <person name="Negishi M."/>
            <person name="Ohta I."/>
            <person name="Ono N."/>
            <person name="Saji S."/>
            <person name="Sakai K."/>
            <person name="Shibata M."/>
            <person name="Shimokawa T."/>
            <person name="Shomura A."/>
            <person name="Song J."/>
            <person name="Takazaki Y."/>
            <person name="Terasawa K."/>
            <person name="Tsuji K."/>
            <person name="Waki K."/>
            <person name="Yamagata H."/>
            <person name="Yamane H."/>
            <person name="Yoshiki S."/>
            <person name="Yoshihara R."/>
            <person name="Yukawa K."/>
            <person name="Zhong H."/>
            <person name="Iwama H."/>
            <person name="Endo T."/>
            <person name="Ito H."/>
            <person name="Hahn J.H."/>
            <person name="Kim H.-I."/>
            <person name="Eun M.-Y."/>
            <person name="Yano M."/>
            <person name="Jiang J."/>
            <person name="Gojobori T."/>
        </authorList>
    </citation>
    <scope>NUCLEOTIDE SEQUENCE [LARGE SCALE GENOMIC DNA]</scope>
    <source>
        <strain>cv. Nipponbare</strain>
    </source>
</reference>
<reference key="2">
    <citation type="journal article" date="2005" name="Nature">
        <title>The map-based sequence of the rice genome.</title>
        <authorList>
            <consortium name="International rice genome sequencing project (IRGSP)"/>
        </authorList>
    </citation>
    <scope>NUCLEOTIDE SEQUENCE [LARGE SCALE GENOMIC DNA]</scope>
    <source>
        <strain>cv. Nipponbare</strain>
    </source>
</reference>
<reference key="3">
    <citation type="journal article" date="2008" name="Nucleic Acids Res.">
        <title>The rice annotation project database (RAP-DB): 2008 update.</title>
        <authorList>
            <consortium name="The rice annotation project (RAP)"/>
        </authorList>
    </citation>
    <scope>GENOME REANNOTATION</scope>
    <source>
        <strain>cv. Nipponbare</strain>
    </source>
</reference>
<reference key="4">
    <citation type="journal article" date="2013" name="Rice">
        <title>Improvement of the Oryza sativa Nipponbare reference genome using next generation sequence and optical map data.</title>
        <authorList>
            <person name="Kawahara Y."/>
            <person name="de la Bastide M."/>
            <person name="Hamilton J.P."/>
            <person name="Kanamori H."/>
            <person name="McCombie W.R."/>
            <person name="Ouyang S."/>
            <person name="Schwartz D.C."/>
            <person name="Tanaka T."/>
            <person name="Wu J."/>
            <person name="Zhou S."/>
            <person name="Childs K.L."/>
            <person name="Davidson R.M."/>
            <person name="Lin H."/>
            <person name="Quesada-Ocampo L."/>
            <person name="Vaillancourt B."/>
            <person name="Sakai H."/>
            <person name="Lee S.S."/>
            <person name="Kim J."/>
            <person name="Numa H."/>
            <person name="Itoh T."/>
            <person name="Buell C.R."/>
            <person name="Matsumoto T."/>
        </authorList>
    </citation>
    <scope>GENOME REANNOTATION</scope>
    <source>
        <strain>cv. Nipponbare</strain>
    </source>
</reference>
<reference key="5">
    <citation type="journal article" date="2003" name="Science">
        <title>Collection, mapping, and annotation of over 28,000 cDNA clones from japonica rice.</title>
        <authorList>
            <consortium name="The rice full-length cDNA consortium"/>
        </authorList>
    </citation>
    <scope>NUCLEOTIDE SEQUENCE [LARGE SCALE MRNA]</scope>
    <source>
        <strain>cv. Nipponbare</strain>
    </source>
</reference>
<reference key="6">
    <citation type="journal article" date="2006" name="BMC Plant Biol.">
        <title>Analysis of rice glycosyl hydrolase family 1 and expression of Os4bglu12 beta-glucosidase.</title>
        <authorList>
            <person name="Opassiri R."/>
            <person name="Pomthong B."/>
            <person name="Onkoksoong T."/>
            <person name="Akiyama T."/>
            <person name="Esen A."/>
            <person name="Ketudat Cairns J.R."/>
        </authorList>
    </citation>
    <scope>GENE FAMILY</scope>
    <scope>NOMENCLATURE</scope>
</reference>
<feature type="signal peptide" evidence="5">
    <location>
        <begin position="1"/>
        <end position="21"/>
    </location>
</feature>
<feature type="chain" id="PRO_0000390320" description="Beta-glucosidase 1">
    <location>
        <begin position="22"/>
        <end position="516"/>
    </location>
</feature>
<feature type="active site" description="Proton donor" evidence="3">
    <location>
        <position position="215"/>
    </location>
</feature>
<feature type="active site" description="Nucleophile" evidence="3">
    <location>
        <position position="424"/>
    </location>
</feature>
<feature type="binding site" evidence="3">
    <location>
        <position position="68"/>
    </location>
    <ligand>
        <name>a beta-D-glucoside</name>
        <dbReference type="ChEBI" id="CHEBI:22798"/>
    </ligand>
</feature>
<feature type="binding site" evidence="3">
    <location>
        <position position="169"/>
    </location>
    <ligand>
        <name>a beta-D-glucoside</name>
        <dbReference type="ChEBI" id="CHEBI:22798"/>
    </ligand>
</feature>
<feature type="binding site" evidence="3">
    <location>
        <begin position="214"/>
        <end position="215"/>
    </location>
    <ligand>
        <name>a beta-D-glucoside</name>
        <dbReference type="ChEBI" id="CHEBI:22798"/>
    </ligand>
</feature>
<feature type="binding site" evidence="3">
    <location>
        <position position="353"/>
    </location>
    <ligand>
        <name>a beta-D-glucoside</name>
        <dbReference type="ChEBI" id="CHEBI:22798"/>
    </ligand>
</feature>
<feature type="binding site" evidence="4">
    <location>
        <position position="424"/>
    </location>
    <ligand>
        <name>a beta-D-glucoside</name>
        <dbReference type="ChEBI" id="CHEBI:22798"/>
    </ligand>
</feature>
<feature type="binding site" evidence="3">
    <location>
        <position position="471"/>
    </location>
    <ligand>
        <name>a beta-D-glucoside</name>
        <dbReference type="ChEBI" id="CHEBI:22798"/>
    </ligand>
</feature>
<feature type="binding site" evidence="3">
    <location>
        <begin position="478"/>
        <end position="479"/>
    </location>
    <ligand>
        <name>a beta-D-glucoside</name>
        <dbReference type="ChEBI" id="CHEBI:22798"/>
    </ligand>
</feature>
<feature type="binding site" evidence="1">
    <location>
        <position position="487"/>
    </location>
    <ligand>
        <name>a beta-D-glucoside</name>
        <dbReference type="ChEBI" id="CHEBI:22798"/>
    </ligand>
</feature>
<feature type="glycosylation site" description="N-linked (GlcNAc...) asparagine" evidence="6">
    <location>
        <position position="96"/>
    </location>
</feature>
<feature type="glycosylation site" description="N-linked (GlcNAc...) asparagine" evidence="6">
    <location>
        <position position="290"/>
    </location>
</feature>
<feature type="glycosylation site" description="N-linked (GlcNAc...) asparagine" evidence="6">
    <location>
        <position position="364"/>
    </location>
</feature>
<feature type="glycosylation site" description="N-linked (GlcNAc...) asparagine" evidence="6">
    <location>
        <position position="432"/>
    </location>
</feature>
<feature type="disulfide bond" evidence="3">
    <location>
        <begin position="234"/>
        <end position="237"/>
    </location>
</feature>
<feature type="sequence conflict" description="In Ref. 5; AK069177." evidence="7" ref="5">
    <original>K</original>
    <variation>E</variation>
    <location>
        <position position="208"/>
    </location>
</feature>
<accession>Q5QMT0</accession>
<accession>A0A0P0V347</accession>
<comment type="catalytic activity">
    <reaction evidence="2">
        <text>Hydrolysis of terminal, non-reducing beta-D-glucosyl residues with release of beta-D-glucose.</text>
        <dbReference type="EC" id="3.2.1.21"/>
    </reaction>
</comment>
<comment type="similarity">
    <text evidence="7">Belongs to the glycosyl hydrolase 1 family.</text>
</comment>
<gene>
    <name type="primary">BGLU1</name>
    <name type="ordered locus">Os01g0508000</name>
    <name type="ordered locus">LOC_Os01g32364</name>
    <name type="ORF">OSJNBa0094H06.33</name>
</gene>
<organism>
    <name type="scientific">Oryza sativa subsp. japonica</name>
    <name type="common">Rice</name>
    <dbReference type="NCBI Taxonomy" id="39947"/>
    <lineage>
        <taxon>Eukaryota</taxon>
        <taxon>Viridiplantae</taxon>
        <taxon>Streptophyta</taxon>
        <taxon>Embryophyta</taxon>
        <taxon>Tracheophyta</taxon>
        <taxon>Spermatophyta</taxon>
        <taxon>Magnoliopsida</taxon>
        <taxon>Liliopsida</taxon>
        <taxon>Poales</taxon>
        <taxon>Poaceae</taxon>
        <taxon>BOP clade</taxon>
        <taxon>Oryzoideae</taxon>
        <taxon>Oryzeae</taxon>
        <taxon>Oryzinae</taxon>
        <taxon>Oryza</taxon>
        <taxon>Oryza sativa</taxon>
    </lineage>
</organism>
<proteinExistence type="evidence at transcript level"/>
<name>BGL01_ORYSJ</name>